<evidence type="ECO:0000255" key="1">
    <source>
        <dbReference type="HAMAP-Rule" id="MF_01558"/>
    </source>
</evidence>
<evidence type="ECO:0000255" key="2">
    <source>
        <dbReference type="PROSITE-ProRule" id="PRU01083"/>
    </source>
</evidence>
<name>CDD_SALPC</name>
<sequence>MHPRFQTAFAQLADNLQSALAPILADHHFPAMLTAEQVSTLKNTAGLDEDALAFALLPLAAACARTDLSHFNVGAIARGVSGNWYFGANMEFLGATMQQTVHAEQSAISHAWLRGEKGLAAVTVNYTPCGHCRQFMNELNSGLDLRIHLPGRAPHTLRDYLPDAFGPKDLEIKTLLMDEQDHGFTLTGDTLTQAAITAANKSHMPYSHSPSGVALECKDGRIFTGSYAENAAFNPTLPPLQGALNLLSLNGYDYADIQRAILAEKGDAALIQWDATAATLKALGCHNIDRVLLG</sequence>
<keyword id="KW-0378">Hydrolase</keyword>
<keyword id="KW-0479">Metal-binding</keyword>
<keyword id="KW-0862">Zinc</keyword>
<feature type="chain" id="PRO_1000185417" description="Cytidine deaminase">
    <location>
        <begin position="1"/>
        <end position="294"/>
    </location>
</feature>
<feature type="domain" description="CMP/dCMP-type deaminase 1" evidence="2">
    <location>
        <begin position="48"/>
        <end position="168"/>
    </location>
</feature>
<feature type="domain" description="CMP/dCMP-type deaminase 2" evidence="2">
    <location>
        <begin position="186"/>
        <end position="294"/>
    </location>
</feature>
<feature type="active site" description="Proton donor" evidence="1">
    <location>
        <position position="104"/>
    </location>
</feature>
<feature type="binding site" evidence="1">
    <location>
        <begin position="89"/>
        <end position="91"/>
    </location>
    <ligand>
        <name>substrate</name>
    </ligand>
</feature>
<feature type="binding site" evidence="1">
    <location>
        <position position="102"/>
    </location>
    <ligand>
        <name>Zn(2+)</name>
        <dbReference type="ChEBI" id="CHEBI:29105"/>
        <note>catalytic</note>
    </ligand>
</feature>
<feature type="binding site" evidence="1">
    <location>
        <position position="129"/>
    </location>
    <ligand>
        <name>Zn(2+)</name>
        <dbReference type="ChEBI" id="CHEBI:29105"/>
        <note>catalytic</note>
    </ligand>
</feature>
<feature type="binding site" evidence="1">
    <location>
        <position position="132"/>
    </location>
    <ligand>
        <name>Zn(2+)</name>
        <dbReference type="ChEBI" id="CHEBI:29105"/>
        <note>catalytic</note>
    </ligand>
</feature>
<organism>
    <name type="scientific">Salmonella paratyphi C (strain RKS4594)</name>
    <dbReference type="NCBI Taxonomy" id="476213"/>
    <lineage>
        <taxon>Bacteria</taxon>
        <taxon>Pseudomonadati</taxon>
        <taxon>Pseudomonadota</taxon>
        <taxon>Gammaproteobacteria</taxon>
        <taxon>Enterobacterales</taxon>
        <taxon>Enterobacteriaceae</taxon>
        <taxon>Salmonella</taxon>
    </lineage>
</organism>
<protein>
    <recommendedName>
        <fullName evidence="1">Cytidine deaminase</fullName>
        <ecNumber evidence="1">3.5.4.5</ecNumber>
    </recommendedName>
    <alternativeName>
        <fullName evidence="1">Cytidine aminohydrolase</fullName>
        <shortName evidence="1">CDA</shortName>
    </alternativeName>
</protein>
<proteinExistence type="inferred from homology"/>
<accession>C0Q0V4</accession>
<comment type="function">
    <text evidence="1">This enzyme scavenges exogenous and endogenous cytidine and 2'-deoxycytidine for UMP synthesis.</text>
</comment>
<comment type="catalytic activity">
    <reaction evidence="1">
        <text>cytidine + H2O + H(+) = uridine + NH4(+)</text>
        <dbReference type="Rhea" id="RHEA:16069"/>
        <dbReference type="ChEBI" id="CHEBI:15377"/>
        <dbReference type="ChEBI" id="CHEBI:15378"/>
        <dbReference type="ChEBI" id="CHEBI:16704"/>
        <dbReference type="ChEBI" id="CHEBI:17562"/>
        <dbReference type="ChEBI" id="CHEBI:28938"/>
        <dbReference type="EC" id="3.5.4.5"/>
    </reaction>
</comment>
<comment type="catalytic activity">
    <reaction evidence="1">
        <text>2'-deoxycytidine + H2O + H(+) = 2'-deoxyuridine + NH4(+)</text>
        <dbReference type="Rhea" id="RHEA:13433"/>
        <dbReference type="ChEBI" id="CHEBI:15377"/>
        <dbReference type="ChEBI" id="CHEBI:15378"/>
        <dbReference type="ChEBI" id="CHEBI:15698"/>
        <dbReference type="ChEBI" id="CHEBI:16450"/>
        <dbReference type="ChEBI" id="CHEBI:28938"/>
        <dbReference type="EC" id="3.5.4.5"/>
    </reaction>
</comment>
<comment type="cofactor">
    <cofactor evidence="1">
        <name>Zn(2+)</name>
        <dbReference type="ChEBI" id="CHEBI:29105"/>
    </cofactor>
    <text evidence="1">Binds 1 zinc ion.</text>
</comment>
<comment type="subunit">
    <text evidence="1">Homodimer.</text>
</comment>
<comment type="similarity">
    <text evidence="1">Belongs to the cytidine and deoxycytidylate deaminase family.</text>
</comment>
<reference key="1">
    <citation type="journal article" date="2009" name="PLoS ONE">
        <title>Salmonella paratyphi C: genetic divergence from Salmonella choleraesuis and pathogenic convergence with Salmonella typhi.</title>
        <authorList>
            <person name="Liu W.-Q."/>
            <person name="Feng Y."/>
            <person name="Wang Y."/>
            <person name="Zou Q.-H."/>
            <person name="Chen F."/>
            <person name="Guo J.-T."/>
            <person name="Peng Y.-H."/>
            <person name="Jin Y."/>
            <person name="Li Y.-G."/>
            <person name="Hu S.-N."/>
            <person name="Johnston R.N."/>
            <person name="Liu G.-R."/>
            <person name="Liu S.-L."/>
        </authorList>
    </citation>
    <scope>NUCLEOTIDE SEQUENCE [LARGE SCALE GENOMIC DNA]</scope>
    <source>
        <strain>RKS4594</strain>
    </source>
</reference>
<gene>
    <name evidence="1" type="primary">cdd</name>
    <name type="ordered locus">SPC_1519</name>
</gene>
<dbReference type="EC" id="3.5.4.5" evidence="1"/>
<dbReference type="EMBL" id="CP000857">
    <property type="protein sequence ID" value="ACN45673.1"/>
    <property type="molecule type" value="Genomic_DNA"/>
</dbReference>
<dbReference type="RefSeq" id="WP_000553526.1">
    <property type="nucleotide sequence ID" value="NC_012125.1"/>
</dbReference>
<dbReference type="SMR" id="C0Q0V4"/>
<dbReference type="KEGG" id="sei:SPC_1519"/>
<dbReference type="HOGENOM" id="CLU_052424_0_0_6"/>
<dbReference type="Proteomes" id="UP000001599">
    <property type="component" value="Chromosome"/>
</dbReference>
<dbReference type="GO" id="GO:0005829">
    <property type="term" value="C:cytosol"/>
    <property type="evidence" value="ECO:0007669"/>
    <property type="project" value="TreeGrafter"/>
</dbReference>
<dbReference type="GO" id="GO:0004126">
    <property type="term" value="F:cytidine deaminase activity"/>
    <property type="evidence" value="ECO:0007669"/>
    <property type="project" value="UniProtKB-UniRule"/>
</dbReference>
<dbReference type="GO" id="GO:0042802">
    <property type="term" value="F:identical protein binding"/>
    <property type="evidence" value="ECO:0007669"/>
    <property type="project" value="UniProtKB-ARBA"/>
</dbReference>
<dbReference type="GO" id="GO:0008270">
    <property type="term" value="F:zinc ion binding"/>
    <property type="evidence" value="ECO:0007669"/>
    <property type="project" value="UniProtKB-UniRule"/>
</dbReference>
<dbReference type="GO" id="GO:0009972">
    <property type="term" value="P:cytidine deamination"/>
    <property type="evidence" value="ECO:0007669"/>
    <property type="project" value="InterPro"/>
</dbReference>
<dbReference type="CDD" id="cd01283">
    <property type="entry name" value="cytidine_deaminase"/>
    <property type="match status" value="2"/>
</dbReference>
<dbReference type="FunFam" id="3.40.140.10:FF:000006">
    <property type="entry name" value="Cytidine deaminase"/>
    <property type="match status" value="1"/>
</dbReference>
<dbReference type="FunFam" id="3.40.140.10:FF:000007">
    <property type="entry name" value="Cytidine deaminase"/>
    <property type="match status" value="1"/>
</dbReference>
<dbReference type="Gene3D" id="3.40.140.10">
    <property type="entry name" value="Cytidine Deaminase, domain 2"/>
    <property type="match status" value="2"/>
</dbReference>
<dbReference type="HAMAP" id="MF_01558">
    <property type="entry name" value="Cyt_deam"/>
    <property type="match status" value="1"/>
</dbReference>
<dbReference type="InterPro" id="IPR016192">
    <property type="entry name" value="APOBEC/CMP_deaminase_Zn-bd"/>
</dbReference>
<dbReference type="InterPro" id="IPR002125">
    <property type="entry name" value="CMP_dCMP_dom"/>
</dbReference>
<dbReference type="InterPro" id="IPR013171">
    <property type="entry name" value="Cyd/dCyd_deaminase_Zn-bd"/>
</dbReference>
<dbReference type="InterPro" id="IPR050202">
    <property type="entry name" value="Cyt/Deoxycyt_deaminase"/>
</dbReference>
<dbReference type="InterPro" id="IPR006263">
    <property type="entry name" value="Cyt_deam_dimer"/>
</dbReference>
<dbReference type="InterPro" id="IPR016193">
    <property type="entry name" value="Cytidine_deaminase-like"/>
</dbReference>
<dbReference type="InterPro" id="IPR020797">
    <property type="entry name" value="Cytidine_deaminase_bacteria"/>
</dbReference>
<dbReference type="NCBIfam" id="TIGR01355">
    <property type="entry name" value="cyt_deam_dimer"/>
    <property type="match status" value="1"/>
</dbReference>
<dbReference type="NCBIfam" id="NF006537">
    <property type="entry name" value="PRK09027.1"/>
    <property type="match status" value="1"/>
</dbReference>
<dbReference type="PANTHER" id="PTHR11644">
    <property type="entry name" value="CYTIDINE DEAMINASE"/>
    <property type="match status" value="1"/>
</dbReference>
<dbReference type="PANTHER" id="PTHR11644:SF2">
    <property type="entry name" value="CYTIDINE DEAMINASE"/>
    <property type="match status" value="1"/>
</dbReference>
<dbReference type="Pfam" id="PF00383">
    <property type="entry name" value="dCMP_cyt_deam_1"/>
    <property type="match status" value="1"/>
</dbReference>
<dbReference type="Pfam" id="PF08211">
    <property type="entry name" value="dCMP_cyt_deam_2"/>
    <property type="match status" value="1"/>
</dbReference>
<dbReference type="PIRSF" id="PIRSF006334">
    <property type="entry name" value="Cdd_plus_pseudo"/>
    <property type="match status" value="1"/>
</dbReference>
<dbReference type="SUPFAM" id="SSF53927">
    <property type="entry name" value="Cytidine deaminase-like"/>
    <property type="match status" value="2"/>
</dbReference>
<dbReference type="PROSITE" id="PS00903">
    <property type="entry name" value="CYT_DCMP_DEAMINASES_1"/>
    <property type="match status" value="1"/>
</dbReference>
<dbReference type="PROSITE" id="PS51747">
    <property type="entry name" value="CYT_DCMP_DEAMINASES_2"/>
    <property type="match status" value="2"/>
</dbReference>